<evidence type="ECO:0000255" key="1">
    <source>
        <dbReference type="HAMAP-Rule" id="MF_00963"/>
    </source>
</evidence>
<evidence type="ECO:0000305" key="2"/>
<feature type="chain" id="PRO_0000093881" description="RNA polymerase sigma factor SigA">
    <location>
        <begin position="1"/>
        <end position="571"/>
    </location>
</feature>
<feature type="DNA-binding region" description="H-T-H motif" evidence="1">
    <location>
        <begin position="515"/>
        <end position="534"/>
    </location>
</feature>
<feature type="region of interest" description="Sigma-70 factor domain-2" evidence="1">
    <location>
        <begin position="321"/>
        <end position="391"/>
    </location>
</feature>
<feature type="region of interest" description="Sigma-70 factor domain-3" evidence="1">
    <location>
        <begin position="400"/>
        <end position="476"/>
    </location>
</feature>
<feature type="region of interest" description="Sigma-70 factor domain-4" evidence="1">
    <location>
        <begin position="489"/>
        <end position="542"/>
    </location>
</feature>
<feature type="short sequence motif" description="Interaction with polymerase core subunit RpoC">
    <location>
        <begin position="345"/>
        <end position="348"/>
    </location>
</feature>
<feature type="sequence conflict" description="In Ref. 1; AAA23168." evidence="2" ref="1">
    <original>MD</original>
    <variation>IH</variation>
    <location>
        <begin position="3"/>
        <end position="4"/>
    </location>
</feature>
<feature type="sequence conflict" description="In Ref. 1; AAA23168." evidence="2" ref="1">
    <original>A</original>
    <variation>R</variation>
    <location>
        <position position="10"/>
    </location>
</feature>
<feature type="sequence conflict" description="In Ref. 1; AAA23168." evidence="2" ref="1">
    <original>K</original>
    <variation>Q</variation>
    <location>
        <position position="319"/>
    </location>
</feature>
<feature type="sequence conflict" description="In Ref. 1; AAA23168." evidence="2" ref="1">
    <original>E</original>
    <variation>K</variation>
    <location>
        <position position="488"/>
    </location>
</feature>
<comment type="function">
    <text evidence="1">Sigma factors are initiation factors that promote the attachment of RNA polymerase to specific initiation sites and are then released. This sigma factor is the primary sigma factor during exponential growth.</text>
</comment>
<comment type="subunit">
    <text evidence="1">Interacts transiently with the RNA polymerase catalytic core.</text>
</comment>
<comment type="subcellular location">
    <subcellularLocation>
        <location evidence="1">Cytoplasm</location>
    </subcellularLocation>
</comment>
<comment type="similarity">
    <text evidence="1">Belongs to the sigma-70 factor family. RpoD/SigA subfamily.</text>
</comment>
<reference key="1">
    <citation type="journal article" date="1990" name="J. Bacteriol.">
        <title>A polymerase chain reaction-based approach to cloning sigma factors from eubacteria and its application to the isolation of a sigma-70 homolog from Chlamydia trachomatis.</title>
        <authorList>
            <person name="Engel J.N."/>
            <person name="Ganem D."/>
        </authorList>
    </citation>
    <scope>NUCLEOTIDE SEQUENCE [GENOMIC DNA]</scope>
    <source>
        <strain>MoPn</strain>
    </source>
</reference>
<reference key="2">
    <citation type="journal article" date="2000" name="Nucleic Acids Res.">
        <title>Genome sequences of Chlamydia trachomatis MoPn and Chlamydia pneumoniae AR39.</title>
        <authorList>
            <person name="Read T.D."/>
            <person name="Brunham R.C."/>
            <person name="Shen C."/>
            <person name="Gill S.R."/>
            <person name="Heidelberg J.F."/>
            <person name="White O."/>
            <person name="Hickey E.K."/>
            <person name="Peterson J.D."/>
            <person name="Utterback T.R."/>
            <person name="Berry K.J."/>
            <person name="Bass S."/>
            <person name="Linher K.D."/>
            <person name="Weidman J.F."/>
            <person name="Khouri H.M."/>
            <person name="Craven B."/>
            <person name="Bowman C."/>
            <person name="Dodson R.J."/>
            <person name="Gwinn M.L."/>
            <person name="Nelson W.C."/>
            <person name="DeBoy R.T."/>
            <person name="Kolonay J.F."/>
            <person name="McClarty G."/>
            <person name="Salzberg S.L."/>
            <person name="Eisen J.A."/>
            <person name="Fraser C.M."/>
        </authorList>
    </citation>
    <scope>NUCLEOTIDE SEQUENCE [LARGE SCALE GENOMIC DNA]</scope>
    <source>
        <strain>MoPn / Nigg</strain>
    </source>
</reference>
<gene>
    <name evidence="1" type="primary">sigA</name>
    <name type="synonym">rpoD</name>
    <name type="ordered locus">TC_0905</name>
</gene>
<protein>
    <recommendedName>
        <fullName evidence="1">RNA polymerase sigma factor SigA</fullName>
    </recommendedName>
    <alternativeName>
        <fullName>Sigma-66</fullName>
    </alternativeName>
    <alternativeName>
        <fullName evidence="1">Sigma-70</fullName>
    </alternativeName>
    <alternativeName>
        <fullName>Sigma-A</fullName>
    </alternativeName>
</protein>
<proteinExistence type="inferred from homology"/>
<sequence>MRMDTLDSQAADAAQEEEIQRKLEELVTLAKDQGFITYEEINEILPPSFDSPEQIDQVLIFLAGMDVQVLNQADVERQKERKKEAKELEGLAKRSEGTPDDPVRMYLKEMGTVPLLTREEEVEISKRIEKAQVQIERIILRFRYSTKEAVSIAQYLINGKERFDKIVSEKEVEDKTHFLNLLPKLISLLKEEDSYLEERLLALKDPALSKQDQAKLNDELEKCRIRTQAYLRCFHCRHNVTEDFGEVVFKAYDSFLQLEQQINDLKVRAERNKFAAAKLAAARRKLYKREVAAGRTLEEFKKDVRMLQRWMDKSQEAKKEMVESNLRLVISIAKKYTNRGLSFLDLIQEGNMGLMKAVEKFEYRRGYKFSTYATWWIRQAVTRAIADQARTIRIPVHMIETINKVLRGAKKLMMETGKEPTPEELGEELGFTPDRVREIYKIAQHPISLQAEVGDSGESSFGDFLEDTAVESPAEATGYSMLKDKMKEVLKTLTDRERFVLIHRFGLLDGRPKTLEEVGSAFNVTRERIRQIEAKALRKMRHPIRSKQLRAFLDLLEEEKTGSGKIKSYKN</sequence>
<organism>
    <name type="scientific">Chlamydia muridarum (strain MoPn / Nigg)</name>
    <dbReference type="NCBI Taxonomy" id="243161"/>
    <lineage>
        <taxon>Bacteria</taxon>
        <taxon>Pseudomonadati</taxon>
        <taxon>Chlamydiota</taxon>
        <taxon>Chlamydiia</taxon>
        <taxon>Chlamydiales</taxon>
        <taxon>Chlamydiaceae</taxon>
        <taxon>Chlamydia/Chlamydophila group</taxon>
        <taxon>Chlamydia</taxon>
    </lineage>
</organism>
<keyword id="KW-0963">Cytoplasm</keyword>
<keyword id="KW-0238">DNA-binding</keyword>
<keyword id="KW-0731">Sigma factor</keyword>
<keyword id="KW-0804">Transcription</keyword>
<keyword id="KW-0805">Transcription regulation</keyword>
<name>SIGA_CHLMU</name>
<dbReference type="EMBL" id="M36475">
    <property type="protein sequence ID" value="AAA23168.1"/>
    <property type="molecule type" value="Genomic_DNA"/>
</dbReference>
<dbReference type="EMBL" id="AE002160">
    <property type="protein sequence ID" value="AAF39698.1"/>
    <property type="molecule type" value="Genomic_DNA"/>
</dbReference>
<dbReference type="PIR" id="A35258">
    <property type="entry name" value="RNCW7H"/>
</dbReference>
<dbReference type="PIR" id="A81653">
    <property type="entry name" value="A81653"/>
</dbReference>
<dbReference type="RefSeq" id="WP_010231898.1">
    <property type="nucleotide sequence ID" value="NZ_CP063055.1"/>
</dbReference>
<dbReference type="SMR" id="P56835"/>
<dbReference type="GeneID" id="1246274"/>
<dbReference type="KEGG" id="cmu:TC_0905"/>
<dbReference type="eggNOG" id="COG0568">
    <property type="taxonomic scope" value="Bacteria"/>
</dbReference>
<dbReference type="HOGENOM" id="CLU_014793_7_2_0"/>
<dbReference type="OrthoDB" id="9809557at2"/>
<dbReference type="Proteomes" id="UP000000800">
    <property type="component" value="Chromosome"/>
</dbReference>
<dbReference type="GO" id="GO:0005737">
    <property type="term" value="C:cytoplasm"/>
    <property type="evidence" value="ECO:0007669"/>
    <property type="project" value="UniProtKB-SubCell"/>
</dbReference>
<dbReference type="GO" id="GO:0003677">
    <property type="term" value="F:DNA binding"/>
    <property type="evidence" value="ECO:0007669"/>
    <property type="project" value="UniProtKB-UniRule"/>
</dbReference>
<dbReference type="GO" id="GO:0016987">
    <property type="term" value="F:sigma factor activity"/>
    <property type="evidence" value="ECO:0007669"/>
    <property type="project" value="UniProtKB-UniRule"/>
</dbReference>
<dbReference type="GO" id="GO:0006352">
    <property type="term" value="P:DNA-templated transcription initiation"/>
    <property type="evidence" value="ECO:0007669"/>
    <property type="project" value="UniProtKB-UniRule"/>
</dbReference>
<dbReference type="CDD" id="cd06171">
    <property type="entry name" value="Sigma70_r4"/>
    <property type="match status" value="1"/>
</dbReference>
<dbReference type="FunFam" id="1.10.601.10:FF:000001">
    <property type="entry name" value="RNA polymerase sigma factor SigA"/>
    <property type="match status" value="1"/>
</dbReference>
<dbReference type="Gene3D" id="1.10.601.10">
    <property type="entry name" value="RNA Polymerase Primary Sigma Factor"/>
    <property type="match status" value="1"/>
</dbReference>
<dbReference type="Gene3D" id="1.10.220.120">
    <property type="entry name" value="Sigma-70 factor, region 1.1"/>
    <property type="match status" value="1"/>
</dbReference>
<dbReference type="Gene3D" id="1.10.10.10">
    <property type="entry name" value="Winged helix-like DNA-binding domain superfamily/Winged helix DNA-binding domain"/>
    <property type="match status" value="2"/>
</dbReference>
<dbReference type="HAMAP" id="MF_00963">
    <property type="entry name" value="Sigma70_RpoD_SigA"/>
    <property type="match status" value="1"/>
</dbReference>
<dbReference type="InterPro" id="IPR014284">
    <property type="entry name" value="RNA_pol_sigma-70_dom"/>
</dbReference>
<dbReference type="InterPro" id="IPR000943">
    <property type="entry name" value="RNA_pol_sigma70"/>
</dbReference>
<dbReference type="InterPro" id="IPR009042">
    <property type="entry name" value="RNA_pol_sigma70_r1_2"/>
</dbReference>
<dbReference type="InterPro" id="IPR007627">
    <property type="entry name" value="RNA_pol_sigma70_r2"/>
</dbReference>
<dbReference type="InterPro" id="IPR007624">
    <property type="entry name" value="RNA_pol_sigma70_r3"/>
</dbReference>
<dbReference type="InterPro" id="IPR007630">
    <property type="entry name" value="RNA_pol_sigma70_r4"/>
</dbReference>
<dbReference type="InterPro" id="IPR007127">
    <property type="entry name" value="RNA_pol_sigma_70_r1_1"/>
</dbReference>
<dbReference type="InterPro" id="IPR042189">
    <property type="entry name" value="RNA_pol_sigma_70_r1_1_sf"/>
</dbReference>
<dbReference type="InterPro" id="IPR013325">
    <property type="entry name" value="RNA_pol_sigma_r2"/>
</dbReference>
<dbReference type="InterPro" id="IPR013324">
    <property type="entry name" value="RNA_pol_sigma_r3/r4-like"/>
</dbReference>
<dbReference type="InterPro" id="IPR012760">
    <property type="entry name" value="RNA_pol_sigma_RpoD_C"/>
</dbReference>
<dbReference type="InterPro" id="IPR050239">
    <property type="entry name" value="Sigma-70_RNA_pol_init_factors"/>
</dbReference>
<dbReference type="InterPro" id="IPR028630">
    <property type="entry name" value="Sigma70_RpoD"/>
</dbReference>
<dbReference type="InterPro" id="IPR036388">
    <property type="entry name" value="WH-like_DNA-bd_sf"/>
</dbReference>
<dbReference type="NCBIfam" id="NF004562">
    <property type="entry name" value="PRK05901.1-4"/>
    <property type="match status" value="1"/>
</dbReference>
<dbReference type="NCBIfam" id="TIGR02393">
    <property type="entry name" value="RpoD_Cterm"/>
    <property type="match status" value="1"/>
</dbReference>
<dbReference type="NCBIfam" id="TIGR02937">
    <property type="entry name" value="sigma70-ECF"/>
    <property type="match status" value="1"/>
</dbReference>
<dbReference type="PANTHER" id="PTHR30603">
    <property type="entry name" value="RNA POLYMERASE SIGMA FACTOR RPO"/>
    <property type="match status" value="1"/>
</dbReference>
<dbReference type="PANTHER" id="PTHR30603:SF60">
    <property type="entry name" value="RNA POLYMERASE SIGMA FACTOR RPOD"/>
    <property type="match status" value="1"/>
</dbReference>
<dbReference type="Pfam" id="PF03979">
    <property type="entry name" value="Sigma70_r1_1"/>
    <property type="match status" value="1"/>
</dbReference>
<dbReference type="Pfam" id="PF00140">
    <property type="entry name" value="Sigma70_r1_2"/>
    <property type="match status" value="1"/>
</dbReference>
<dbReference type="Pfam" id="PF04542">
    <property type="entry name" value="Sigma70_r2"/>
    <property type="match status" value="1"/>
</dbReference>
<dbReference type="Pfam" id="PF04539">
    <property type="entry name" value="Sigma70_r3"/>
    <property type="match status" value="1"/>
</dbReference>
<dbReference type="Pfam" id="PF04545">
    <property type="entry name" value="Sigma70_r4"/>
    <property type="match status" value="1"/>
</dbReference>
<dbReference type="PRINTS" id="PR00046">
    <property type="entry name" value="SIGMA70FCT"/>
</dbReference>
<dbReference type="SUPFAM" id="SSF88946">
    <property type="entry name" value="Sigma2 domain of RNA polymerase sigma factors"/>
    <property type="match status" value="1"/>
</dbReference>
<dbReference type="SUPFAM" id="SSF88659">
    <property type="entry name" value="Sigma3 and sigma4 domains of RNA polymerase sigma factors"/>
    <property type="match status" value="2"/>
</dbReference>
<dbReference type="PROSITE" id="PS00715">
    <property type="entry name" value="SIGMA70_1"/>
    <property type="match status" value="1"/>
</dbReference>
<dbReference type="PROSITE" id="PS00716">
    <property type="entry name" value="SIGMA70_2"/>
    <property type="match status" value="1"/>
</dbReference>
<accession>P56835</accession>